<protein>
    <recommendedName>
        <fullName evidence="1">Ribosomal protein uS12 methylthiotransferase RimO</fullName>
        <shortName evidence="1">uS12 MTTase</shortName>
        <shortName evidence="1">uS12 methylthiotransferase</shortName>
        <ecNumber evidence="1">2.8.4.4</ecNumber>
    </recommendedName>
    <alternativeName>
        <fullName evidence="1">Ribosomal protein uS12 (aspartate-C(3))-methylthiotransferase</fullName>
    </alternativeName>
    <alternativeName>
        <fullName evidence="1">Ribosome maturation factor RimO</fullName>
    </alternativeName>
</protein>
<organism>
    <name type="scientific">Pelotomaculum thermopropionicum (strain DSM 13744 / JCM 10971 / SI)</name>
    <dbReference type="NCBI Taxonomy" id="370438"/>
    <lineage>
        <taxon>Bacteria</taxon>
        <taxon>Bacillati</taxon>
        <taxon>Bacillota</taxon>
        <taxon>Clostridia</taxon>
        <taxon>Eubacteriales</taxon>
        <taxon>Desulfotomaculaceae</taxon>
        <taxon>Pelotomaculum</taxon>
    </lineage>
</organism>
<gene>
    <name evidence="1" type="primary">rimO</name>
    <name type="ordered locus">PTH_1296</name>
</gene>
<sequence>MGIKIGLVSLGCPKNLVDSEIMLGILKKAGYEITAREKEADVLIVNTCSFINDAKEESIRTIIELARNKINGRCRAILVAGCLAQRYPAELMAEMPEIDGLVGTGQVPEIARAVRRVLEGGKVLLTGSPGYLHDAYFPKVLATPPYTAYLKIAEGCDNRCSYCVIPAVRGPFRSRRMEDIMSEAEELANKGVKELIIVAQDTTRYGIDLYGKPMLDALLEGLTGIKGPVWLRLLYTYPSLITDDLIYLMAKSRKICRYLDIPFQHASNRVLQLMNRRGSKEEAARLVAKLRADIPGIVLRTTFIVGFPGETEEDFQELLDFMAEAKFDRAGVFTYSREEGTAAAEMPGQVPEEVKLLRRERAMMLQQEISLQKNLKRVGEVIEVLVEGKSLKGRGMYTGRSEGDAPGIDGKVFFKSGFNLQPGDFARVLIKGGTEYDLTGETVL</sequence>
<keyword id="KW-0004">4Fe-4S</keyword>
<keyword id="KW-0963">Cytoplasm</keyword>
<keyword id="KW-0408">Iron</keyword>
<keyword id="KW-0411">Iron-sulfur</keyword>
<keyword id="KW-0479">Metal-binding</keyword>
<keyword id="KW-1185">Reference proteome</keyword>
<keyword id="KW-0949">S-adenosyl-L-methionine</keyword>
<keyword id="KW-0808">Transferase</keyword>
<reference key="1">
    <citation type="journal article" date="2008" name="Genome Res.">
        <title>The genome of Pelotomaculum thermopropionicum reveals niche-associated evolution in anaerobic microbiota.</title>
        <authorList>
            <person name="Kosaka T."/>
            <person name="Kato S."/>
            <person name="Shimoyama T."/>
            <person name="Ishii S."/>
            <person name="Abe T."/>
            <person name="Watanabe K."/>
        </authorList>
    </citation>
    <scope>NUCLEOTIDE SEQUENCE [LARGE SCALE GENOMIC DNA]</scope>
    <source>
        <strain>DSM 13744 / JCM 10971 / SI</strain>
    </source>
</reference>
<evidence type="ECO:0000255" key="1">
    <source>
        <dbReference type="HAMAP-Rule" id="MF_01865"/>
    </source>
</evidence>
<evidence type="ECO:0000255" key="2">
    <source>
        <dbReference type="PROSITE-ProRule" id="PRU01266"/>
    </source>
</evidence>
<dbReference type="EC" id="2.8.4.4" evidence="1"/>
<dbReference type="EMBL" id="AP009389">
    <property type="protein sequence ID" value="BAF59477.1"/>
    <property type="molecule type" value="Genomic_DNA"/>
</dbReference>
<dbReference type="SMR" id="A5D2R3"/>
<dbReference type="STRING" id="370438.PTH_1296"/>
<dbReference type="KEGG" id="pth:PTH_1296"/>
<dbReference type="eggNOG" id="COG0621">
    <property type="taxonomic scope" value="Bacteria"/>
</dbReference>
<dbReference type="HOGENOM" id="CLU_018697_0_1_9"/>
<dbReference type="Proteomes" id="UP000006556">
    <property type="component" value="Chromosome"/>
</dbReference>
<dbReference type="GO" id="GO:0005829">
    <property type="term" value="C:cytosol"/>
    <property type="evidence" value="ECO:0007669"/>
    <property type="project" value="TreeGrafter"/>
</dbReference>
<dbReference type="GO" id="GO:0051539">
    <property type="term" value="F:4 iron, 4 sulfur cluster binding"/>
    <property type="evidence" value="ECO:0007669"/>
    <property type="project" value="UniProtKB-UniRule"/>
</dbReference>
<dbReference type="GO" id="GO:0035599">
    <property type="term" value="F:aspartic acid methylthiotransferase activity"/>
    <property type="evidence" value="ECO:0007669"/>
    <property type="project" value="TreeGrafter"/>
</dbReference>
<dbReference type="GO" id="GO:0046872">
    <property type="term" value="F:metal ion binding"/>
    <property type="evidence" value="ECO:0007669"/>
    <property type="project" value="UniProtKB-KW"/>
</dbReference>
<dbReference type="GO" id="GO:0103039">
    <property type="term" value="F:protein methylthiotransferase activity"/>
    <property type="evidence" value="ECO:0007669"/>
    <property type="project" value="UniProtKB-EC"/>
</dbReference>
<dbReference type="GO" id="GO:0006400">
    <property type="term" value="P:tRNA modification"/>
    <property type="evidence" value="ECO:0007669"/>
    <property type="project" value="InterPro"/>
</dbReference>
<dbReference type="CDD" id="cd01335">
    <property type="entry name" value="Radical_SAM"/>
    <property type="match status" value="1"/>
</dbReference>
<dbReference type="FunFam" id="3.80.30.20:FF:000001">
    <property type="entry name" value="tRNA-2-methylthio-N(6)-dimethylallyladenosine synthase 2"/>
    <property type="match status" value="1"/>
</dbReference>
<dbReference type="Gene3D" id="3.40.50.12160">
    <property type="entry name" value="Methylthiotransferase, N-terminal domain"/>
    <property type="match status" value="1"/>
</dbReference>
<dbReference type="Gene3D" id="2.40.50.140">
    <property type="entry name" value="Nucleic acid-binding proteins"/>
    <property type="match status" value="1"/>
</dbReference>
<dbReference type="Gene3D" id="3.80.30.20">
    <property type="entry name" value="tm_1862 like domain"/>
    <property type="match status" value="1"/>
</dbReference>
<dbReference type="HAMAP" id="MF_01865">
    <property type="entry name" value="MTTase_RimO"/>
    <property type="match status" value="1"/>
</dbReference>
<dbReference type="InterPro" id="IPR006638">
    <property type="entry name" value="Elp3/MiaA/NifB-like_rSAM"/>
</dbReference>
<dbReference type="InterPro" id="IPR005839">
    <property type="entry name" value="Methylthiotransferase"/>
</dbReference>
<dbReference type="InterPro" id="IPR020612">
    <property type="entry name" value="Methylthiotransferase_CS"/>
</dbReference>
<dbReference type="InterPro" id="IPR013848">
    <property type="entry name" value="Methylthiotransferase_N"/>
</dbReference>
<dbReference type="InterPro" id="IPR038135">
    <property type="entry name" value="Methylthiotransferase_N_sf"/>
</dbReference>
<dbReference type="InterPro" id="IPR012340">
    <property type="entry name" value="NA-bd_OB-fold"/>
</dbReference>
<dbReference type="InterPro" id="IPR005840">
    <property type="entry name" value="Ribosomal_uS12_MeSTrfase_RimO"/>
</dbReference>
<dbReference type="InterPro" id="IPR007197">
    <property type="entry name" value="rSAM"/>
</dbReference>
<dbReference type="InterPro" id="IPR023404">
    <property type="entry name" value="rSAM_horseshoe"/>
</dbReference>
<dbReference type="InterPro" id="IPR002792">
    <property type="entry name" value="TRAM_dom"/>
</dbReference>
<dbReference type="NCBIfam" id="TIGR01125">
    <property type="entry name" value="30S ribosomal protein S12 methylthiotransferase RimO"/>
    <property type="match status" value="1"/>
</dbReference>
<dbReference type="NCBIfam" id="TIGR00089">
    <property type="entry name" value="MiaB/RimO family radical SAM methylthiotransferase"/>
    <property type="match status" value="1"/>
</dbReference>
<dbReference type="PANTHER" id="PTHR43837">
    <property type="entry name" value="RIBOSOMAL PROTEIN S12 METHYLTHIOTRANSFERASE RIMO"/>
    <property type="match status" value="1"/>
</dbReference>
<dbReference type="PANTHER" id="PTHR43837:SF1">
    <property type="entry name" value="RIBOSOMAL PROTEIN US12 METHYLTHIOTRANSFERASE RIMO"/>
    <property type="match status" value="1"/>
</dbReference>
<dbReference type="Pfam" id="PF04055">
    <property type="entry name" value="Radical_SAM"/>
    <property type="match status" value="1"/>
</dbReference>
<dbReference type="Pfam" id="PF18693">
    <property type="entry name" value="TRAM_2"/>
    <property type="match status" value="1"/>
</dbReference>
<dbReference type="Pfam" id="PF00919">
    <property type="entry name" value="UPF0004"/>
    <property type="match status" value="1"/>
</dbReference>
<dbReference type="SFLD" id="SFLDG01082">
    <property type="entry name" value="B12-binding_domain_containing"/>
    <property type="match status" value="1"/>
</dbReference>
<dbReference type="SFLD" id="SFLDG01061">
    <property type="entry name" value="methylthiotransferase"/>
    <property type="match status" value="1"/>
</dbReference>
<dbReference type="SFLD" id="SFLDF00274">
    <property type="entry name" value="ribosomal_protein_S12_methylth"/>
    <property type="match status" value="1"/>
</dbReference>
<dbReference type="SMART" id="SM00729">
    <property type="entry name" value="Elp3"/>
    <property type="match status" value="1"/>
</dbReference>
<dbReference type="SUPFAM" id="SSF102114">
    <property type="entry name" value="Radical SAM enzymes"/>
    <property type="match status" value="1"/>
</dbReference>
<dbReference type="PROSITE" id="PS51449">
    <property type="entry name" value="MTTASE_N"/>
    <property type="match status" value="1"/>
</dbReference>
<dbReference type="PROSITE" id="PS01278">
    <property type="entry name" value="MTTASE_RADICAL"/>
    <property type="match status" value="1"/>
</dbReference>
<dbReference type="PROSITE" id="PS51918">
    <property type="entry name" value="RADICAL_SAM"/>
    <property type="match status" value="1"/>
</dbReference>
<dbReference type="PROSITE" id="PS50926">
    <property type="entry name" value="TRAM"/>
    <property type="match status" value="1"/>
</dbReference>
<feature type="chain" id="PRO_0000374917" description="Ribosomal protein uS12 methylthiotransferase RimO">
    <location>
        <begin position="1"/>
        <end position="444"/>
    </location>
</feature>
<feature type="domain" description="MTTase N-terminal" evidence="1">
    <location>
        <begin position="3"/>
        <end position="119"/>
    </location>
</feature>
<feature type="domain" description="Radical SAM core" evidence="2">
    <location>
        <begin position="142"/>
        <end position="372"/>
    </location>
</feature>
<feature type="domain" description="TRAM" evidence="1">
    <location>
        <begin position="375"/>
        <end position="444"/>
    </location>
</feature>
<feature type="binding site" evidence="1">
    <location>
        <position position="12"/>
    </location>
    <ligand>
        <name>[4Fe-4S] cluster</name>
        <dbReference type="ChEBI" id="CHEBI:49883"/>
        <label>1</label>
    </ligand>
</feature>
<feature type="binding site" evidence="1">
    <location>
        <position position="48"/>
    </location>
    <ligand>
        <name>[4Fe-4S] cluster</name>
        <dbReference type="ChEBI" id="CHEBI:49883"/>
        <label>1</label>
    </ligand>
</feature>
<feature type="binding site" evidence="1">
    <location>
        <position position="82"/>
    </location>
    <ligand>
        <name>[4Fe-4S] cluster</name>
        <dbReference type="ChEBI" id="CHEBI:49883"/>
        <label>1</label>
    </ligand>
</feature>
<feature type="binding site" evidence="1">
    <location>
        <position position="156"/>
    </location>
    <ligand>
        <name>[4Fe-4S] cluster</name>
        <dbReference type="ChEBI" id="CHEBI:49883"/>
        <label>2</label>
        <note>4Fe-4S-S-AdoMet</note>
    </ligand>
</feature>
<feature type="binding site" evidence="1">
    <location>
        <position position="160"/>
    </location>
    <ligand>
        <name>[4Fe-4S] cluster</name>
        <dbReference type="ChEBI" id="CHEBI:49883"/>
        <label>2</label>
        <note>4Fe-4S-S-AdoMet</note>
    </ligand>
</feature>
<feature type="binding site" evidence="1">
    <location>
        <position position="163"/>
    </location>
    <ligand>
        <name>[4Fe-4S] cluster</name>
        <dbReference type="ChEBI" id="CHEBI:49883"/>
        <label>2</label>
        <note>4Fe-4S-S-AdoMet</note>
    </ligand>
</feature>
<name>RIMO_PELTS</name>
<accession>A5D2R3</accession>
<comment type="function">
    <text evidence="1">Catalyzes the methylthiolation of an aspartic acid residue of ribosomal protein uS12.</text>
</comment>
<comment type="catalytic activity">
    <reaction evidence="1">
        <text>L-aspartate(89)-[ribosomal protein uS12]-hydrogen + (sulfur carrier)-SH + AH2 + 2 S-adenosyl-L-methionine = 3-methylsulfanyl-L-aspartate(89)-[ribosomal protein uS12]-hydrogen + (sulfur carrier)-H + 5'-deoxyadenosine + L-methionine + A + S-adenosyl-L-homocysteine + 2 H(+)</text>
        <dbReference type="Rhea" id="RHEA:37087"/>
        <dbReference type="Rhea" id="RHEA-COMP:10460"/>
        <dbReference type="Rhea" id="RHEA-COMP:10461"/>
        <dbReference type="Rhea" id="RHEA-COMP:14737"/>
        <dbReference type="Rhea" id="RHEA-COMP:14739"/>
        <dbReference type="ChEBI" id="CHEBI:13193"/>
        <dbReference type="ChEBI" id="CHEBI:15378"/>
        <dbReference type="ChEBI" id="CHEBI:17319"/>
        <dbReference type="ChEBI" id="CHEBI:17499"/>
        <dbReference type="ChEBI" id="CHEBI:29917"/>
        <dbReference type="ChEBI" id="CHEBI:29961"/>
        <dbReference type="ChEBI" id="CHEBI:57844"/>
        <dbReference type="ChEBI" id="CHEBI:57856"/>
        <dbReference type="ChEBI" id="CHEBI:59789"/>
        <dbReference type="ChEBI" id="CHEBI:64428"/>
        <dbReference type="ChEBI" id="CHEBI:73599"/>
        <dbReference type="EC" id="2.8.4.4"/>
    </reaction>
</comment>
<comment type="cofactor">
    <cofactor evidence="1">
        <name>[4Fe-4S] cluster</name>
        <dbReference type="ChEBI" id="CHEBI:49883"/>
    </cofactor>
    <text evidence="1">Binds 2 [4Fe-4S] clusters. One cluster is coordinated with 3 cysteines and an exchangeable S-adenosyl-L-methionine.</text>
</comment>
<comment type="subcellular location">
    <subcellularLocation>
        <location evidence="1">Cytoplasm</location>
    </subcellularLocation>
</comment>
<comment type="similarity">
    <text evidence="1">Belongs to the methylthiotransferase family. RimO subfamily.</text>
</comment>
<proteinExistence type="inferred from homology"/>